<keyword id="KW-0067">ATP-binding</keyword>
<keyword id="KW-0963">Cytoplasm</keyword>
<keyword id="KW-0418">Kinase</keyword>
<keyword id="KW-0547">Nucleotide-binding</keyword>
<keyword id="KW-0808">Transferase</keyword>
<protein>
    <recommendedName>
        <fullName evidence="1">Guanylate kinase</fullName>
        <ecNumber evidence="1">2.7.4.8</ecNumber>
    </recommendedName>
    <alternativeName>
        <fullName evidence="1">GMP kinase</fullName>
    </alternativeName>
</protein>
<comment type="function">
    <text evidence="1">Essential for recycling GMP and indirectly, cGMP.</text>
</comment>
<comment type="catalytic activity">
    <reaction evidence="1">
        <text>GMP + ATP = GDP + ADP</text>
        <dbReference type="Rhea" id="RHEA:20780"/>
        <dbReference type="ChEBI" id="CHEBI:30616"/>
        <dbReference type="ChEBI" id="CHEBI:58115"/>
        <dbReference type="ChEBI" id="CHEBI:58189"/>
        <dbReference type="ChEBI" id="CHEBI:456216"/>
        <dbReference type="EC" id="2.7.4.8"/>
    </reaction>
</comment>
<comment type="subcellular location">
    <subcellularLocation>
        <location evidence="1">Cytoplasm</location>
    </subcellularLocation>
</comment>
<comment type="similarity">
    <text evidence="1">Belongs to the guanylate kinase family.</text>
</comment>
<evidence type="ECO:0000255" key="1">
    <source>
        <dbReference type="HAMAP-Rule" id="MF_00328"/>
    </source>
</evidence>
<feature type="chain" id="PRO_0000170577" description="Guanylate kinase">
    <location>
        <begin position="1"/>
        <end position="212"/>
    </location>
</feature>
<feature type="domain" description="Guanylate kinase-like" evidence="1">
    <location>
        <begin position="7"/>
        <end position="187"/>
    </location>
</feature>
<feature type="binding site" evidence="1">
    <location>
        <begin position="14"/>
        <end position="21"/>
    </location>
    <ligand>
        <name>ATP</name>
        <dbReference type="ChEBI" id="CHEBI:30616"/>
    </ligand>
</feature>
<organism>
    <name type="scientific">Onion yellows phytoplasma (strain OY-M)</name>
    <dbReference type="NCBI Taxonomy" id="262768"/>
    <lineage>
        <taxon>Bacteria</taxon>
        <taxon>Bacillati</taxon>
        <taxon>Mycoplasmatota</taxon>
        <taxon>Mollicutes</taxon>
        <taxon>Acholeplasmatales</taxon>
        <taxon>Acholeplasmataceae</taxon>
        <taxon>Candidatus Phytoplasma</taxon>
        <taxon>16SrI (Aster yellows group)</taxon>
    </lineage>
</organism>
<name>KGUA_ONYPE</name>
<gene>
    <name evidence="1" type="primary">gmk</name>
    <name type="ordered locus">PAM_737</name>
</gene>
<accession>P60554</accession>
<reference key="1">
    <citation type="journal article" date="2004" name="Nat. Genet.">
        <title>Reductive evolution suggested from the complete genome sequence of a plant-pathogenic phytoplasma.</title>
        <authorList>
            <person name="Oshima K."/>
            <person name="Kakizawa S."/>
            <person name="Nishigawa H."/>
            <person name="Jung H.-Y."/>
            <person name="Wei W."/>
            <person name="Suzuki S."/>
            <person name="Arashida R."/>
            <person name="Nakata D."/>
            <person name="Miyata S."/>
            <person name="Ugaki M."/>
            <person name="Namba S."/>
        </authorList>
    </citation>
    <scope>NUCLEOTIDE SEQUENCE [LARGE SCALE GENOMIC DNA]</scope>
    <source>
        <strain>OY-M</strain>
    </source>
</reference>
<proteinExistence type="inferred from homology"/>
<sequence>MKLNKKGLLIVLSGPSGVGKATVRKALFEMTNHNFVYSVSATTRKPRPGEQDGKDYHFLTKEEFEKGIENNCFLEWAKFIDHYYGTPKKQIQDFLKQGKEVFLEIEVEGATHLRKKRIPNTVFIFLVPPEKKALYDRLKKRGTEQEANIAKRIAKANNEFHLAHKYDYIVVNDEVANAADRIIAIIRAEHAKTKRSIRNYLKILEDNGYAEQ</sequence>
<dbReference type="EC" id="2.7.4.8" evidence="1"/>
<dbReference type="EMBL" id="AP006628">
    <property type="protein sequence ID" value="BAD04822.1"/>
    <property type="molecule type" value="Genomic_DNA"/>
</dbReference>
<dbReference type="SMR" id="P60554"/>
<dbReference type="STRING" id="262768.PAM_737"/>
<dbReference type="KEGG" id="poy:PAM_737"/>
<dbReference type="eggNOG" id="COG0194">
    <property type="taxonomic scope" value="Bacteria"/>
</dbReference>
<dbReference type="HOGENOM" id="CLU_001715_1_2_14"/>
<dbReference type="BioCyc" id="OYEL262768:G1G26-892-MONOMER"/>
<dbReference type="Proteomes" id="UP000002523">
    <property type="component" value="Chromosome"/>
</dbReference>
<dbReference type="GO" id="GO:0005829">
    <property type="term" value="C:cytosol"/>
    <property type="evidence" value="ECO:0007669"/>
    <property type="project" value="TreeGrafter"/>
</dbReference>
<dbReference type="GO" id="GO:0005524">
    <property type="term" value="F:ATP binding"/>
    <property type="evidence" value="ECO:0007669"/>
    <property type="project" value="UniProtKB-UniRule"/>
</dbReference>
<dbReference type="GO" id="GO:0004385">
    <property type="term" value="F:guanylate kinase activity"/>
    <property type="evidence" value="ECO:0007669"/>
    <property type="project" value="UniProtKB-UniRule"/>
</dbReference>
<dbReference type="CDD" id="cd00071">
    <property type="entry name" value="GMPK"/>
    <property type="match status" value="1"/>
</dbReference>
<dbReference type="FunFam" id="3.30.63.10:FF:000002">
    <property type="entry name" value="Guanylate kinase 1"/>
    <property type="match status" value="1"/>
</dbReference>
<dbReference type="Gene3D" id="3.30.63.10">
    <property type="entry name" value="Guanylate Kinase phosphate binding domain"/>
    <property type="match status" value="1"/>
</dbReference>
<dbReference type="Gene3D" id="3.40.50.300">
    <property type="entry name" value="P-loop containing nucleotide triphosphate hydrolases"/>
    <property type="match status" value="1"/>
</dbReference>
<dbReference type="HAMAP" id="MF_00328">
    <property type="entry name" value="Guanylate_kinase"/>
    <property type="match status" value="1"/>
</dbReference>
<dbReference type="InterPro" id="IPR008145">
    <property type="entry name" value="GK/Ca_channel_bsu"/>
</dbReference>
<dbReference type="InterPro" id="IPR008144">
    <property type="entry name" value="Guanylate_kin-like_dom"/>
</dbReference>
<dbReference type="InterPro" id="IPR017665">
    <property type="entry name" value="Guanylate_kinase"/>
</dbReference>
<dbReference type="InterPro" id="IPR020590">
    <property type="entry name" value="Guanylate_kinase_CS"/>
</dbReference>
<dbReference type="InterPro" id="IPR027417">
    <property type="entry name" value="P-loop_NTPase"/>
</dbReference>
<dbReference type="NCBIfam" id="TIGR03263">
    <property type="entry name" value="guanyl_kin"/>
    <property type="match status" value="1"/>
</dbReference>
<dbReference type="PANTHER" id="PTHR23117:SF13">
    <property type="entry name" value="GUANYLATE KINASE"/>
    <property type="match status" value="1"/>
</dbReference>
<dbReference type="PANTHER" id="PTHR23117">
    <property type="entry name" value="GUANYLATE KINASE-RELATED"/>
    <property type="match status" value="1"/>
</dbReference>
<dbReference type="Pfam" id="PF00625">
    <property type="entry name" value="Guanylate_kin"/>
    <property type="match status" value="1"/>
</dbReference>
<dbReference type="SMART" id="SM00072">
    <property type="entry name" value="GuKc"/>
    <property type="match status" value="1"/>
</dbReference>
<dbReference type="SUPFAM" id="SSF52540">
    <property type="entry name" value="P-loop containing nucleoside triphosphate hydrolases"/>
    <property type="match status" value="1"/>
</dbReference>
<dbReference type="PROSITE" id="PS00856">
    <property type="entry name" value="GUANYLATE_KINASE_1"/>
    <property type="match status" value="1"/>
</dbReference>
<dbReference type="PROSITE" id="PS50052">
    <property type="entry name" value="GUANYLATE_KINASE_2"/>
    <property type="match status" value="1"/>
</dbReference>